<protein>
    <recommendedName>
        <fullName evidence="1">Anhydro-N-acetylmuramic acid kinase</fullName>
        <ecNumber evidence="1">2.7.1.170</ecNumber>
    </recommendedName>
    <alternativeName>
        <fullName evidence="1">AnhMurNAc kinase</fullName>
    </alternativeName>
</protein>
<organism>
    <name type="scientific">Rhodopseudomonas palustris (strain HaA2)</name>
    <dbReference type="NCBI Taxonomy" id="316058"/>
    <lineage>
        <taxon>Bacteria</taxon>
        <taxon>Pseudomonadati</taxon>
        <taxon>Pseudomonadota</taxon>
        <taxon>Alphaproteobacteria</taxon>
        <taxon>Hyphomicrobiales</taxon>
        <taxon>Nitrobacteraceae</taxon>
        <taxon>Rhodopseudomonas</taxon>
    </lineage>
</organism>
<feature type="chain" id="PRO_0000250048" description="Anhydro-N-acetylmuramic acid kinase">
    <location>
        <begin position="1"/>
        <end position="367"/>
    </location>
</feature>
<feature type="binding site" evidence="1">
    <location>
        <begin position="11"/>
        <end position="18"/>
    </location>
    <ligand>
        <name>ATP</name>
        <dbReference type="ChEBI" id="CHEBI:30616"/>
    </ligand>
</feature>
<gene>
    <name evidence="1" type="primary">anmK</name>
    <name type="ordered locus">RPB_2997</name>
</gene>
<evidence type="ECO:0000255" key="1">
    <source>
        <dbReference type="HAMAP-Rule" id="MF_01270"/>
    </source>
</evidence>
<evidence type="ECO:0000305" key="2"/>
<keyword id="KW-0067">ATP-binding</keyword>
<keyword id="KW-0119">Carbohydrate metabolism</keyword>
<keyword id="KW-0418">Kinase</keyword>
<keyword id="KW-0547">Nucleotide-binding</keyword>
<keyword id="KW-1185">Reference proteome</keyword>
<keyword id="KW-0808">Transferase</keyword>
<proteinExistence type="inferred from homology"/>
<dbReference type="EC" id="2.7.1.170" evidence="1"/>
<dbReference type="EMBL" id="CP000250">
    <property type="protein sequence ID" value="ABD07699.1"/>
    <property type="status" value="ALT_INIT"/>
    <property type="molecule type" value="Genomic_DNA"/>
</dbReference>
<dbReference type="RefSeq" id="WP_041798266.1">
    <property type="nucleotide sequence ID" value="NC_007778.1"/>
</dbReference>
<dbReference type="SMR" id="Q2IVR1"/>
<dbReference type="STRING" id="316058.RPB_2997"/>
<dbReference type="KEGG" id="rpb:RPB_2997"/>
<dbReference type="eggNOG" id="COG2377">
    <property type="taxonomic scope" value="Bacteria"/>
</dbReference>
<dbReference type="HOGENOM" id="CLU_038782_3_0_5"/>
<dbReference type="OrthoDB" id="9763949at2"/>
<dbReference type="UniPathway" id="UPA00343"/>
<dbReference type="UniPathway" id="UPA00544"/>
<dbReference type="Proteomes" id="UP000008809">
    <property type="component" value="Chromosome"/>
</dbReference>
<dbReference type="GO" id="GO:0005524">
    <property type="term" value="F:ATP binding"/>
    <property type="evidence" value="ECO:0007669"/>
    <property type="project" value="UniProtKB-UniRule"/>
</dbReference>
<dbReference type="GO" id="GO:0016301">
    <property type="term" value="F:kinase activity"/>
    <property type="evidence" value="ECO:0007669"/>
    <property type="project" value="UniProtKB-KW"/>
</dbReference>
<dbReference type="GO" id="GO:0016773">
    <property type="term" value="F:phosphotransferase activity, alcohol group as acceptor"/>
    <property type="evidence" value="ECO:0007669"/>
    <property type="project" value="UniProtKB-UniRule"/>
</dbReference>
<dbReference type="GO" id="GO:0097175">
    <property type="term" value="P:1,6-anhydro-N-acetyl-beta-muramic acid catabolic process"/>
    <property type="evidence" value="ECO:0007669"/>
    <property type="project" value="UniProtKB-UniRule"/>
</dbReference>
<dbReference type="GO" id="GO:0006040">
    <property type="term" value="P:amino sugar metabolic process"/>
    <property type="evidence" value="ECO:0007669"/>
    <property type="project" value="InterPro"/>
</dbReference>
<dbReference type="GO" id="GO:0009254">
    <property type="term" value="P:peptidoglycan turnover"/>
    <property type="evidence" value="ECO:0007669"/>
    <property type="project" value="UniProtKB-UniRule"/>
</dbReference>
<dbReference type="Gene3D" id="3.30.420.40">
    <property type="match status" value="2"/>
</dbReference>
<dbReference type="HAMAP" id="MF_01270">
    <property type="entry name" value="AnhMurNAc_kinase"/>
    <property type="match status" value="1"/>
</dbReference>
<dbReference type="InterPro" id="IPR005338">
    <property type="entry name" value="Anhydro_N_Ac-Mur_kinase"/>
</dbReference>
<dbReference type="InterPro" id="IPR043129">
    <property type="entry name" value="ATPase_NBD"/>
</dbReference>
<dbReference type="NCBIfam" id="NF007141">
    <property type="entry name" value="PRK09585.1-5"/>
    <property type="match status" value="1"/>
</dbReference>
<dbReference type="PANTHER" id="PTHR30605">
    <property type="entry name" value="ANHYDRO-N-ACETYLMURAMIC ACID KINASE"/>
    <property type="match status" value="1"/>
</dbReference>
<dbReference type="PANTHER" id="PTHR30605:SF0">
    <property type="entry name" value="ANHYDRO-N-ACETYLMURAMIC ACID KINASE"/>
    <property type="match status" value="1"/>
</dbReference>
<dbReference type="Pfam" id="PF03702">
    <property type="entry name" value="AnmK"/>
    <property type="match status" value="1"/>
</dbReference>
<dbReference type="SUPFAM" id="SSF53067">
    <property type="entry name" value="Actin-like ATPase domain"/>
    <property type="match status" value="1"/>
</dbReference>
<accession>Q2IVR1</accession>
<reference key="1">
    <citation type="submission" date="2006-01" db="EMBL/GenBank/DDBJ databases">
        <title>Complete sequence of Rhodopseudomonas palustris HaA2.</title>
        <authorList>
            <consortium name="US DOE Joint Genome Institute"/>
            <person name="Copeland A."/>
            <person name="Lucas S."/>
            <person name="Lapidus A."/>
            <person name="Barry K."/>
            <person name="Detter J.C."/>
            <person name="Glavina T."/>
            <person name="Hammon N."/>
            <person name="Israni S."/>
            <person name="Pitluck S."/>
            <person name="Chain P."/>
            <person name="Malfatti S."/>
            <person name="Shin M."/>
            <person name="Vergez L."/>
            <person name="Schmutz J."/>
            <person name="Larimer F."/>
            <person name="Land M."/>
            <person name="Hauser L."/>
            <person name="Pelletier D.A."/>
            <person name="Kyrpides N."/>
            <person name="Anderson I."/>
            <person name="Oda Y."/>
            <person name="Harwood C.S."/>
            <person name="Richardson P."/>
        </authorList>
    </citation>
    <scope>NUCLEOTIDE SEQUENCE [LARGE SCALE GENOMIC DNA]</scope>
    <source>
        <strain>HaA2</strain>
    </source>
</reference>
<name>ANMK_RHOP2</name>
<comment type="function">
    <text evidence="1">Catalyzes the specific phosphorylation of 1,6-anhydro-N-acetylmuramic acid (anhMurNAc) with the simultaneous cleavage of the 1,6-anhydro ring, generating MurNAc-6-P. Is required for the utilization of anhMurNAc either imported from the medium or derived from its own cell wall murein, and thus plays a role in cell wall recycling.</text>
</comment>
<comment type="catalytic activity">
    <reaction evidence="1">
        <text>1,6-anhydro-N-acetyl-beta-muramate + ATP + H2O = N-acetyl-D-muramate 6-phosphate + ADP + H(+)</text>
        <dbReference type="Rhea" id="RHEA:24952"/>
        <dbReference type="ChEBI" id="CHEBI:15377"/>
        <dbReference type="ChEBI" id="CHEBI:15378"/>
        <dbReference type="ChEBI" id="CHEBI:30616"/>
        <dbReference type="ChEBI" id="CHEBI:58690"/>
        <dbReference type="ChEBI" id="CHEBI:58722"/>
        <dbReference type="ChEBI" id="CHEBI:456216"/>
        <dbReference type="EC" id="2.7.1.170"/>
    </reaction>
</comment>
<comment type="pathway">
    <text evidence="1">Amino-sugar metabolism; 1,6-anhydro-N-acetylmuramate degradation.</text>
</comment>
<comment type="pathway">
    <text evidence="1">Cell wall biogenesis; peptidoglycan recycling.</text>
</comment>
<comment type="similarity">
    <text evidence="1">Belongs to the anhydro-N-acetylmuramic acid kinase family.</text>
</comment>
<comment type="sequence caution" evidence="2">
    <conflict type="erroneous initiation">
        <sequence resource="EMBL-CDS" id="ABD07699"/>
    </conflict>
</comment>
<sequence length="367" mass="38269">MMMTAIGLMSGTSLDGVDVALIKTDGRHVAALGPSGYRPYTETERGLLRQALAEATGLDRRDARPGILAEAERAVTIAHAEAVAAFVAQNRITAGAIDIVGFHGQTVLHRPAAKLTVQIGDAQALAKAIRIPVMHDFRAADVAAGGQGAPFVPVYHRALAQSLGRDGPIVVVNIGGVSNVTYIDGNDALIACDTGPGNALLDDFVFRAIGKPFDCEGRLAAQGTADEGWIADALQHPFFAQRPPKSLDRNDFASLGLRDWSPADGAATLTAFTAGAIAAIVPLLPKPPTSFVITGGGARNLTMMRMLREQLEPARVESADALGWSADAMEAQAFGFLAARGLKGLPLSYPATTGVSFPMTGGLLARP</sequence>